<proteinExistence type="evidence at transcript level"/>
<evidence type="ECO:0000250" key="1"/>
<evidence type="ECO:0000305" key="2"/>
<protein>
    <recommendedName>
        <fullName>1-aminocyclopropane-1-carboxylate synthase CMW33</fullName>
        <shortName>ACC synthase</shortName>
        <ecNumber>4.4.1.14</ecNumber>
    </recommendedName>
    <alternativeName>
        <fullName>S-adenosyl-L-methionine methylthioadenosine-lyase</fullName>
    </alternativeName>
</protein>
<gene>
    <name type="primary">ACS1</name>
    <name type="synonym">ACCW</name>
</gene>
<name>1A11_CUCMA</name>
<reference key="1">
    <citation type="journal article" date="1990" name="Plant Cell Physiol.">
        <title>Molecular cloning and sequence of a complementary DNA encoding 1-aminocyclopropane-1-carboxylate synthase induced by tissue wounding.</title>
        <authorList>
            <person name="Nakajima N."/>
            <person name="Mori H."/>
            <person name="Yamazaki K."/>
            <person name="Imaseki H."/>
        </authorList>
    </citation>
    <scope>NUCLEOTIDE SEQUENCE [MRNA]</scope>
</reference>
<comment type="function">
    <text>Catalyzes the formation of 1-aminocyclopropane-1-carboxylate, a direct precursor of ethylene in higher plants.</text>
</comment>
<comment type="catalytic activity">
    <reaction>
        <text>S-adenosyl-L-methionine = 1-aminocyclopropane-1-carboxylate + S-methyl-5'-thioadenosine + H(+)</text>
        <dbReference type="Rhea" id="RHEA:21744"/>
        <dbReference type="ChEBI" id="CHEBI:15378"/>
        <dbReference type="ChEBI" id="CHEBI:17509"/>
        <dbReference type="ChEBI" id="CHEBI:58360"/>
        <dbReference type="ChEBI" id="CHEBI:59789"/>
        <dbReference type="EC" id="4.4.1.14"/>
    </reaction>
</comment>
<comment type="cofactor">
    <cofactor>
        <name>pyridoxal 5'-phosphate</name>
        <dbReference type="ChEBI" id="CHEBI:597326"/>
    </cofactor>
</comment>
<comment type="pathway">
    <text>Alkene biosynthesis; ethylene biosynthesis via S-adenosyl-L-methionine; ethylene from S-adenosyl-L-methionine: step 1/2.</text>
</comment>
<comment type="subunit">
    <text>Homodimer.</text>
</comment>
<comment type="induction">
    <text>By tissue wounding.</text>
</comment>
<comment type="similarity">
    <text evidence="2">Belongs to the class-I pyridoxal-phosphate-dependent aminotransferase family.</text>
</comment>
<dbReference type="EC" id="4.4.1.14"/>
<dbReference type="EMBL" id="D01032">
    <property type="protein sequence ID" value="BAA00838.1"/>
    <property type="molecule type" value="mRNA"/>
</dbReference>
<dbReference type="PIR" id="JQ0926">
    <property type="entry name" value="JQ0926"/>
</dbReference>
<dbReference type="SMR" id="P23599"/>
<dbReference type="OrthoDB" id="691673at2759"/>
<dbReference type="UniPathway" id="UPA00384">
    <property type="reaction ID" value="UER00562"/>
</dbReference>
<dbReference type="Proteomes" id="UP000504608">
    <property type="component" value="Unplaced"/>
</dbReference>
<dbReference type="GO" id="GO:0016847">
    <property type="term" value="F:1-aminocyclopropane-1-carboxylate synthase activity"/>
    <property type="evidence" value="ECO:0007669"/>
    <property type="project" value="UniProtKB-EC"/>
</dbReference>
<dbReference type="GO" id="GO:0030170">
    <property type="term" value="F:pyridoxal phosphate binding"/>
    <property type="evidence" value="ECO:0007669"/>
    <property type="project" value="InterPro"/>
</dbReference>
<dbReference type="GO" id="GO:0008483">
    <property type="term" value="F:transaminase activity"/>
    <property type="evidence" value="ECO:0007669"/>
    <property type="project" value="TreeGrafter"/>
</dbReference>
<dbReference type="GO" id="GO:0009693">
    <property type="term" value="P:ethylene biosynthetic process"/>
    <property type="evidence" value="ECO:0007669"/>
    <property type="project" value="UniProtKB-UniPathway"/>
</dbReference>
<dbReference type="GO" id="GO:0009835">
    <property type="term" value="P:fruit ripening"/>
    <property type="evidence" value="ECO:0007669"/>
    <property type="project" value="UniProtKB-KW"/>
</dbReference>
<dbReference type="CDD" id="cd00609">
    <property type="entry name" value="AAT_like"/>
    <property type="match status" value="1"/>
</dbReference>
<dbReference type="Gene3D" id="3.90.1150.10">
    <property type="entry name" value="Aspartate Aminotransferase, domain 1"/>
    <property type="match status" value="1"/>
</dbReference>
<dbReference type="Gene3D" id="3.40.640.10">
    <property type="entry name" value="Type I PLP-dependent aspartate aminotransferase-like (Major domain)"/>
    <property type="match status" value="1"/>
</dbReference>
<dbReference type="InterPro" id="IPR004839">
    <property type="entry name" value="Aminotransferase_I/II_large"/>
</dbReference>
<dbReference type="InterPro" id="IPR050478">
    <property type="entry name" value="Ethylene_sulfur-biosynth"/>
</dbReference>
<dbReference type="InterPro" id="IPR004838">
    <property type="entry name" value="NHTrfase_class1_PyrdxlP-BS"/>
</dbReference>
<dbReference type="InterPro" id="IPR015424">
    <property type="entry name" value="PyrdxlP-dep_Trfase"/>
</dbReference>
<dbReference type="InterPro" id="IPR015421">
    <property type="entry name" value="PyrdxlP-dep_Trfase_major"/>
</dbReference>
<dbReference type="InterPro" id="IPR015422">
    <property type="entry name" value="PyrdxlP-dep_Trfase_small"/>
</dbReference>
<dbReference type="PANTHER" id="PTHR43795:SF74">
    <property type="entry name" value="1-AMINOCYCLOPROPANE-1-CARBOXYLATE SYNTHASE-LIKE PROTEIN 1"/>
    <property type="match status" value="1"/>
</dbReference>
<dbReference type="PANTHER" id="PTHR43795">
    <property type="entry name" value="BIFUNCTIONAL ASPARTATE AMINOTRANSFERASE AND GLUTAMATE/ASPARTATE-PREPHENATE AMINOTRANSFERASE-RELATED"/>
    <property type="match status" value="1"/>
</dbReference>
<dbReference type="Pfam" id="PF00155">
    <property type="entry name" value="Aminotran_1_2"/>
    <property type="match status" value="1"/>
</dbReference>
<dbReference type="PRINTS" id="PR00753">
    <property type="entry name" value="ACCSYNTHASE"/>
</dbReference>
<dbReference type="SUPFAM" id="SSF53383">
    <property type="entry name" value="PLP-dependent transferases"/>
    <property type="match status" value="1"/>
</dbReference>
<dbReference type="PROSITE" id="PS00105">
    <property type="entry name" value="AA_TRANSFER_CLASS_1"/>
    <property type="match status" value="1"/>
</dbReference>
<accession>P23599</accession>
<feature type="chain" id="PRO_0000123907" description="1-aminocyclopropane-1-carboxylate synthase CMW33">
    <location>
        <begin position="1"/>
        <end position="493"/>
    </location>
</feature>
<feature type="modified residue" description="N6-(pyridoxal phosphate)lysine" evidence="1">
    <location>
        <position position="279"/>
    </location>
</feature>
<sequence>MEFHQIDERNQALLSKIAVDDGHGENSPYFDGWKAYDNDPFHPEDNPLGVIQMGLAENQLSFDMIVDWIRKHPEASICTPKGLERFKSIANFQDYHGLPEFRNGIASFMGKVRGGRVQFDPSRIVMGGGATGASETVIFCLADPGDAFLVPSPYYAAFDRDLKWRTRAQIIRVHCNSSNNFQVTKAALEIAYKKAQEANIKVKGVIITNPSNPLGTTYDRDTLKTLVTFVNQHDIHLICDEIYSATVFKAPTFISIAQIVEEMEHCKKELIHILYSLSKDMGLPGFRVGIIYSYNDVVVRRARQMSSFGLVSSQTQHLLAAMLSDEDFVDKFLAENSKRLAERHARFTKELDKMGITCLNSNAGVFVWMDLRRLLKDQTFKAEMELWRVIINEVKLNVSPGSSFHVTEPGWFRVCFANMDDNTVDVALNRIHSFVENIDKKEDNTVAMPSKTRRRENKLRLSFSFSGRRYDEGNVLNSPHTMSPHSPLVIAKN</sequence>
<organism>
    <name type="scientific">Cucurbita maxima</name>
    <name type="common">Pumpkin</name>
    <name type="synonym">Winter squash</name>
    <dbReference type="NCBI Taxonomy" id="3661"/>
    <lineage>
        <taxon>Eukaryota</taxon>
        <taxon>Viridiplantae</taxon>
        <taxon>Streptophyta</taxon>
        <taxon>Embryophyta</taxon>
        <taxon>Tracheophyta</taxon>
        <taxon>Spermatophyta</taxon>
        <taxon>Magnoliopsida</taxon>
        <taxon>eudicotyledons</taxon>
        <taxon>Gunneridae</taxon>
        <taxon>Pentapetalae</taxon>
        <taxon>rosids</taxon>
        <taxon>fabids</taxon>
        <taxon>Cucurbitales</taxon>
        <taxon>Cucurbitaceae</taxon>
        <taxon>Cucurbiteae</taxon>
        <taxon>Cucurbita</taxon>
    </lineage>
</organism>
<keyword id="KW-0266">Ethylene biosynthesis</keyword>
<keyword id="KW-0292">Fruit ripening</keyword>
<keyword id="KW-0456">Lyase</keyword>
<keyword id="KW-0663">Pyridoxal phosphate</keyword>
<keyword id="KW-1185">Reference proteome</keyword>
<keyword id="KW-0949">S-adenosyl-L-methionine</keyword>